<dbReference type="EC" id="2.4.1.250" evidence="1"/>
<dbReference type="EMBL" id="CP001814">
    <property type="protein sequence ID" value="ACZ83960.1"/>
    <property type="molecule type" value="Genomic_DNA"/>
</dbReference>
<dbReference type="SMR" id="D2B9F4"/>
<dbReference type="STRING" id="479432.Sros_0956"/>
<dbReference type="CAZy" id="GT4">
    <property type="family name" value="Glycosyltransferase Family 4"/>
</dbReference>
<dbReference type="KEGG" id="sro:Sros_0956"/>
<dbReference type="eggNOG" id="COG0438">
    <property type="taxonomic scope" value="Bacteria"/>
</dbReference>
<dbReference type="HOGENOM" id="CLU_009583_2_3_11"/>
<dbReference type="OrthoDB" id="9810929at2"/>
<dbReference type="Proteomes" id="UP000002029">
    <property type="component" value="Chromosome"/>
</dbReference>
<dbReference type="GO" id="GO:0008375">
    <property type="term" value="F:acetylglucosaminyltransferase activity"/>
    <property type="evidence" value="ECO:0007669"/>
    <property type="project" value="UniProtKB-UniRule"/>
</dbReference>
<dbReference type="GO" id="GO:0102710">
    <property type="term" value="F:D-inositol-3-phosphate glycosyltransferase activity"/>
    <property type="evidence" value="ECO:0007669"/>
    <property type="project" value="UniProtKB-EC"/>
</dbReference>
<dbReference type="GO" id="GO:0000287">
    <property type="term" value="F:magnesium ion binding"/>
    <property type="evidence" value="ECO:0007669"/>
    <property type="project" value="UniProtKB-UniRule"/>
</dbReference>
<dbReference type="GO" id="GO:0010125">
    <property type="term" value="P:mycothiol biosynthetic process"/>
    <property type="evidence" value="ECO:0007669"/>
    <property type="project" value="UniProtKB-UniRule"/>
</dbReference>
<dbReference type="CDD" id="cd03800">
    <property type="entry name" value="GT4_sucrose_synthase"/>
    <property type="match status" value="1"/>
</dbReference>
<dbReference type="Gene3D" id="3.40.50.2000">
    <property type="entry name" value="Glycogen Phosphorylase B"/>
    <property type="match status" value="2"/>
</dbReference>
<dbReference type="HAMAP" id="MF_01695">
    <property type="entry name" value="MshA"/>
    <property type="match status" value="1"/>
</dbReference>
<dbReference type="InterPro" id="IPR001296">
    <property type="entry name" value="Glyco_trans_1"/>
</dbReference>
<dbReference type="InterPro" id="IPR028098">
    <property type="entry name" value="Glyco_trans_4-like_N"/>
</dbReference>
<dbReference type="InterPro" id="IPR050194">
    <property type="entry name" value="Glycosyltransferase_grp1"/>
</dbReference>
<dbReference type="InterPro" id="IPR017814">
    <property type="entry name" value="Mycothiol_biosynthesis_MshA"/>
</dbReference>
<dbReference type="NCBIfam" id="TIGR03449">
    <property type="entry name" value="mycothiol_MshA"/>
    <property type="match status" value="1"/>
</dbReference>
<dbReference type="PANTHER" id="PTHR45947">
    <property type="entry name" value="SULFOQUINOVOSYL TRANSFERASE SQD2"/>
    <property type="match status" value="1"/>
</dbReference>
<dbReference type="PANTHER" id="PTHR45947:SF3">
    <property type="entry name" value="SULFOQUINOVOSYL TRANSFERASE SQD2"/>
    <property type="match status" value="1"/>
</dbReference>
<dbReference type="Pfam" id="PF13579">
    <property type="entry name" value="Glyco_trans_4_4"/>
    <property type="match status" value="1"/>
</dbReference>
<dbReference type="Pfam" id="PF00534">
    <property type="entry name" value="Glycos_transf_1"/>
    <property type="match status" value="1"/>
</dbReference>
<dbReference type="SUPFAM" id="SSF53756">
    <property type="entry name" value="UDP-Glycosyltransferase/glycogen phosphorylase"/>
    <property type="match status" value="1"/>
</dbReference>
<proteinExistence type="inferred from homology"/>
<feature type="chain" id="PRO_0000400164" description="D-inositol 3-phosphate glycosyltransferase">
    <location>
        <begin position="1"/>
        <end position="435"/>
    </location>
</feature>
<feature type="binding site" evidence="1">
    <location>
        <position position="25"/>
    </location>
    <ligand>
        <name>1D-myo-inositol 3-phosphate</name>
        <dbReference type="ChEBI" id="CHEBI:58401"/>
    </ligand>
</feature>
<feature type="binding site" evidence="1">
    <location>
        <begin position="31"/>
        <end position="32"/>
    </location>
    <ligand>
        <name>UDP-N-acetyl-alpha-D-glucosamine</name>
        <dbReference type="ChEBI" id="CHEBI:57705"/>
    </ligand>
</feature>
<feature type="binding site" evidence="1">
    <location>
        <begin position="36"/>
        <end position="41"/>
    </location>
    <ligand>
        <name>1D-myo-inositol 3-phosphate</name>
        <dbReference type="ChEBI" id="CHEBI:58401"/>
    </ligand>
</feature>
<feature type="binding site" evidence="1">
    <location>
        <position position="39"/>
    </location>
    <ligand>
        <name>UDP-N-acetyl-alpha-D-glucosamine</name>
        <dbReference type="ChEBI" id="CHEBI:57705"/>
    </ligand>
</feature>
<feature type="binding site" evidence="1">
    <location>
        <position position="94"/>
    </location>
    <ligand>
        <name>1D-myo-inositol 3-phosphate</name>
        <dbReference type="ChEBI" id="CHEBI:58401"/>
    </ligand>
</feature>
<feature type="binding site" evidence="1">
    <location>
        <position position="127"/>
    </location>
    <ligand>
        <name>1D-myo-inositol 3-phosphate</name>
        <dbReference type="ChEBI" id="CHEBI:58401"/>
    </ligand>
</feature>
<feature type="binding site" evidence="1">
    <location>
        <position position="151"/>
    </location>
    <ligand>
        <name>1D-myo-inositol 3-phosphate</name>
        <dbReference type="ChEBI" id="CHEBI:58401"/>
    </ligand>
</feature>
<feature type="binding site" evidence="1">
    <location>
        <position position="171"/>
    </location>
    <ligand>
        <name>1D-myo-inositol 3-phosphate</name>
        <dbReference type="ChEBI" id="CHEBI:58401"/>
    </ligand>
</feature>
<feature type="binding site" evidence="1">
    <location>
        <position position="245"/>
    </location>
    <ligand>
        <name>UDP-N-acetyl-alpha-D-glucosamine</name>
        <dbReference type="ChEBI" id="CHEBI:57705"/>
    </ligand>
</feature>
<feature type="binding site" evidence="1">
    <location>
        <position position="250"/>
    </location>
    <ligand>
        <name>UDP-N-acetyl-alpha-D-glucosamine</name>
        <dbReference type="ChEBI" id="CHEBI:57705"/>
    </ligand>
</feature>
<feature type="binding site" evidence="1">
    <location>
        <position position="320"/>
    </location>
    <ligand>
        <name>Mg(2+)</name>
        <dbReference type="ChEBI" id="CHEBI:18420"/>
    </ligand>
</feature>
<feature type="binding site" evidence="1">
    <location>
        <position position="321"/>
    </location>
    <ligand>
        <name>Mg(2+)</name>
        <dbReference type="ChEBI" id="CHEBI:18420"/>
    </ligand>
</feature>
<feature type="binding site" evidence="1">
    <location>
        <position position="323"/>
    </location>
    <ligand>
        <name>Mg(2+)</name>
        <dbReference type="ChEBI" id="CHEBI:18420"/>
    </ligand>
</feature>
<feature type="binding site" evidence="1">
    <location>
        <position position="333"/>
    </location>
    <ligand>
        <name>UDP-N-acetyl-alpha-D-glucosamine</name>
        <dbReference type="ChEBI" id="CHEBI:57705"/>
    </ligand>
</feature>
<feature type="binding site" evidence="1">
    <location>
        <position position="341"/>
    </location>
    <ligand>
        <name>UDP-N-acetyl-alpha-D-glucosamine</name>
        <dbReference type="ChEBI" id="CHEBI:57705"/>
    </ligand>
</feature>
<feature type="binding site" evidence="1">
    <location>
        <position position="347"/>
    </location>
    <ligand>
        <name>Mg(2+)</name>
        <dbReference type="ChEBI" id="CHEBI:18420"/>
    </ligand>
</feature>
<reference key="1">
    <citation type="journal article" date="2010" name="Stand. Genomic Sci.">
        <title>Complete genome sequence of Streptosporangium roseum type strain (NI 9100).</title>
        <authorList>
            <person name="Nolan M."/>
            <person name="Sikorski J."/>
            <person name="Jando M."/>
            <person name="Lucas S."/>
            <person name="Lapidus A."/>
            <person name="Glavina Del Rio T."/>
            <person name="Chen F."/>
            <person name="Tice H."/>
            <person name="Pitluck S."/>
            <person name="Cheng J.F."/>
            <person name="Chertkov O."/>
            <person name="Sims D."/>
            <person name="Meincke L."/>
            <person name="Brettin T."/>
            <person name="Han C."/>
            <person name="Detter J.C."/>
            <person name="Bruce D."/>
            <person name="Goodwin L."/>
            <person name="Land M."/>
            <person name="Hauser L."/>
            <person name="Chang Y.J."/>
            <person name="Jeffries C.D."/>
            <person name="Ivanova N."/>
            <person name="Mavromatis K."/>
            <person name="Mikhailova N."/>
            <person name="Chen A."/>
            <person name="Palaniappan K."/>
            <person name="Chain P."/>
            <person name="Rohde M."/>
            <person name="Goker M."/>
            <person name="Bristow J."/>
            <person name="Eisen J.A."/>
            <person name="Markowitz V."/>
            <person name="Hugenholtz P."/>
            <person name="Kyrpides N.C."/>
            <person name="Klenk H.P."/>
        </authorList>
    </citation>
    <scope>NUCLEOTIDE SEQUENCE [LARGE SCALE GENOMIC DNA]</scope>
    <source>
        <strain>ATCC 12428 / DSM 43021 / JCM 3005 / KCTC 9067 / NCIMB 10171 / NRRL 2505 / NI 9100</strain>
    </source>
</reference>
<name>MSHA_STRRD</name>
<protein>
    <recommendedName>
        <fullName>D-inositol 3-phosphate glycosyltransferase</fullName>
        <ecNumber evidence="1">2.4.1.250</ecNumber>
    </recommendedName>
    <alternativeName>
        <fullName evidence="1">N-acetylglucosamine-inositol-phosphate N-acetylglucosaminyltransferase</fullName>
        <shortName evidence="1">GlcNAc-Ins-P N-acetylglucosaminyltransferase</shortName>
    </alternativeName>
</protein>
<keyword id="KW-0328">Glycosyltransferase</keyword>
<keyword id="KW-0460">Magnesium</keyword>
<keyword id="KW-0479">Metal-binding</keyword>
<keyword id="KW-1185">Reference proteome</keyword>
<keyword id="KW-0808">Transferase</keyword>
<evidence type="ECO:0000255" key="1">
    <source>
        <dbReference type="HAMAP-Rule" id="MF_01695"/>
    </source>
</evidence>
<gene>
    <name evidence="1" type="primary">mshA</name>
    <name type="ordered locus">Sros_0956</name>
</gene>
<sequence>MVISPSEVVSVRRRRVSRVATISMHTSPLDQPGTGDAGGMNVYIVEAARRLAQLGVEVEIFTRQTSRDLPPVAEIAPGVSVRHVTAGPYEELDKGDLPGQLCGFLSGVLRTEAMYEPGRYDVIHSHYWLSGQVGWLAKERWGVPLVHTMHTMAKVKNLLLAEDDRPEPTARVLGEEQVVQVADRLVANTPTEAQELIDLYGAAPGRVEVVNPGVNLNVFQPASKGAARHRLDLPQDAHVLLFVGRVQPLKAPDVLLRAAARMLIDDPSLRSRLVVVCVGGPSGNGLARPSYLTDVAASLGISDVVRIVPPAPQHELADWYRAADVTVVPSHNESFGLVALESQACGTPVAAASVGGLRTAVADGVSGVLVEGHDPQDWARVLSRFVHRPAWRDALAAGAVAQAAAFGWSATAARLADVYAGAMANLHHVPIAVSS</sequence>
<organism>
    <name type="scientific">Streptosporangium roseum (strain ATCC 12428 / DSM 43021 / JCM 3005 / KCTC 9067 / NCIMB 10171 / NRRL 2505 / NI 9100)</name>
    <dbReference type="NCBI Taxonomy" id="479432"/>
    <lineage>
        <taxon>Bacteria</taxon>
        <taxon>Bacillati</taxon>
        <taxon>Actinomycetota</taxon>
        <taxon>Actinomycetes</taxon>
        <taxon>Streptosporangiales</taxon>
        <taxon>Streptosporangiaceae</taxon>
        <taxon>Streptosporangium</taxon>
    </lineage>
</organism>
<accession>D2B9F4</accession>
<comment type="function">
    <text evidence="1">Catalyzes the transfer of a N-acetyl-glucosamine moiety to 1D-myo-inositol 3-phosphate to produce 1D-myo-inositol 2-acetamido-2-deoxy-glucopyranoside 3-phosphate in the mycothiol biosynthesis pathway.</text>
</comment>
<comment type="catalytic activity">
    <reaction evidence="1">
        <text>1D-myo-inositol 3-phosphate + UDP-N-acetyl-alpha-D-glucosamine = 1D-myo-inositol 2-acetamido-2-deoxy-alpha-D-glucopyranoside 3-phosphate + UDP + H(+)</text>
        <dbReference type="Rhea" id="RHEA:26188"/>
        <dbReference type="ChEBI" id="CHEBI:15378"/>
        <dbReference type="ChEBI" id="CHEBI:57705"/>
        <dbReference type="ChEBI" id="CHEBI:58223"/>
        <dbReference type="ChEBI" id="CHEBI:58401"/>
        <dbReference type="ChEBI" id="CHEBI:58892"/>
        <dbReference type="EC" id="2.4.1.250"/>
    </reaction>
</comment>
<comment type="subunit">
    <text evidence="1">Homodimer.</text>
</comment>
<comment type="similarity">
    <text evidence="1">Belongs to the glycosyltransferase group 1 family. MshA subfamily.</text>
</comment>